<evidence type="ECO:0000250" key="1"/>
<evidence type="ECO:0000255" key="2"/>
<evidence type="ECO:0000255" key="3">
    <source>
        <dbReference type="PROSITE-ProRule" id="PRU00280"/>
    </source>
</evidence>
<evidence type="ECO:0000305" key="4"/>
<proteinExistence type="inferred from homology"/>
<reference key="1">
    <citation type="journal article" date="1989" name="J. Bacteriol.">
        <title>Rhizobium meliloti fixGHI sequence predicts involvement of a specific cation pump in symbiotic nitrogen fixation.</title>
        <authorList>
            <person name="Kahn D."/>
            <person name="David M."/>
            <person name="Domergue O."/>
            <person name="Daveran M.-L."/>
            <person name="Ghai J."/>
            <person name="Hirsch P.R."/>
            <person name="Batut J."/>
        </authorList>
    </citation>
    <scope>NUCLEOTIDE SEQUENCE [GENOMIC DNA]</scope>
    <source>
        <strain>RCR2011 / SU47</strain>
    </source>
</reference>
<reference key="2">
    <citation type="journal article" date="2001" name="Proc. Natl. Acad. Sci. U.S.A.">
        <title>Nucleotide sequence and predicted functions of the entire Sinorhizobium meliloti pSymA megaplasmid.</title>
        <authorList>
            <person name="Barnett M.J."/>
            <person name="Fisher R.F."/>
            <person name="Jones T."/>
            <person name="Komp C."/>
            <person name="Abola A.P."/>
            <person name="Barloy-Hubler F."/>
            <person name="Bowser L."/>
            <person name="Capela D."/>
            <person name="Galibert F."/>
            <person name="Gouzy J."/>
            <person name="Gurjal M."/>
            <person name="Hong A."/>
            <person name="Huizar L."/>
            <person name="Hyman R.W."/>
            <person name="Kahn D."/>
            <person name="Kahn M.L."/>
            <person name="Kalman S."/>
            <person name="Keating D.H."/>
            <person name="Palm C."/>
            <person name="Peck M.C."/>
            <person name="Surzycki R."/>
            <person name="Wells D.H."/>
            <person name="Yeh K.-C."/>
            <person name="Davis R.W."/>
            <person name="Federspiel N.A."/>
            <person name="Long S.R."/>
        </authorList>
    </citation>
    <scope>NUCLEOTIDE SEQUENCE [LARGE SCALE GENOMIC DNA]</scope>
    <source>
        <strain>1021</strain>
    </source>
</reference>
<reference key="3">
    <citation type="journal article" date="2001" name="Science">
        <title>The composite genome of the legume symbiont Sinorhizobium meliloti.</title>
        <authorList>
            <person name="Galibert F."/>
            <person name="Finan T.M."/>
            <person name="Long S.R."/>
            <person name="Puehler A."/>
            <person name="Abola P."/>
            <person name="Ampe F."/>
            <person name="Barloy-Hubler F."/>
            <person name="Barnett M.J."/>
            <person name="Becker A."/>
            <person name="Boistard P."/>
            <person name="Bothe G."/>
            <person name="Boutry M."/>
            <person name="Bowser L."/>
            <person name="Buhrmester J."/>
            <person name="Cadieu E."/>
            <person name="Capela D."/>
            <person name="Chain P."/>
            <person name="Cowie A."/>
            <person name="Davis R.W."/>
            <person name="Dreano S."/>
            <person name="Federspiel N.A."/>
            <person name="Fisher R.F."/>
            <person name="Gloux S."/>
            <person name="Godrie T."/>
            <person name="Goffeau A."/>
            <person name="Golding B."/>
            <person name="Gouzy J."/>
            <person name="Gurjal M."/>
            <person name="Hernandez-Lucas I."/>
            <person name="Hong A."/>
            <person name="Huizar L."/>
            <person name="Hyman R.W."/>
            <person name="Jones T."/>
            <person name="Kahn D."/>
            <person name="Kahn M.L."/>
            <person name="Kalman S."/>
            <person name="Keating D.H."/>
            <person name="Kiss E."/>
            <person name="Komp C."/>
            <person name="Lelaure V."/>
            <person name="Masuy D."/>
            <person name="Palm C."/>
            <person name="Peck M.C."/>
            <person name="Pohl T.M."/>
            <person name="Portetelle D."/>
            <person name="Purnelle B."/>
            <person name="Ramsperger U."/>
            <person name="Surzycki R."/>
            <person name="Thebault P."/>
            <person name="Vandenbol M."/>
            <person name="Vorhoelter F.J."/>
            <person name="Weidner S."/>
            <person name="Wells D.H."/>
            <person name="Wong K."/>
            <person name="Yeh K.-C."/>
            <person name="Batut J."/>
        </authorList>
    </citation>
    <scope>NUCLEOTIDE SEQUENCE [LARGE SCALE GENOMIC DNA]</scope>
    <source>
        <strain>1021</strain>
    </source>
</reference>
<sequence>MSCCASSAAIMVAEGGQASPASEELWLASRDLGGGLRQTELSVPNAYCGTCIATIEGALRAKPEVERARVNLSSRRVSIVWKEEVGGRRTNPCDFLHAIAERGYQTHLFSPGEEEGDDLLKQLILAVAVSGFAATNIMLLSVSVWSGADAATRDLFHWISALIAGPALIYAGRFFYKSAWNAIRHGRTNMDVPIALAVSLSYGMSLHETIGHGEHAWFDASVTLLFFLLIGRTLDHMMRGRARTAISGLARLSPRGATVVHPDGSREYRAVDEINPGDRLIVAAGERVPVDGRVLSGTSDLDRSVVNGESSPTVVTTGDTVQAGTLNLTGPLTLEATAAARDSFIAEIIGLMEAAEGGRARYRRIADRAARYYSPAVHLLALLTFVGWMLVEGDVRHAMLVAVAVLIITCPCALGLAVPVVQVVAAGRLFQGGVMVKDGSAMERLAEIDTVLLDKTGTLTIGKPRLVNAHEISPGRLATAAAIAVHSRHPIAVAIQNSAGAASPIAGDIREIPGAGIEVKTEDGVYRLGSRDFAVGGSGPDGRQSEAILSLDFRELACFRFEDQPRPASRESIEALGRLGIATGILSGDRAPVVAALASSLGISNWYAELSPREKVQVCAAAAEAGHKALVVGDGINDAPVLRAAHVSMAPATAADVGRQAADFVFMHERLSAVPFAIETSRHAGQLIRQNFALAIGYNVIAVPIAILGYATPLVAAVAMSSSSLVVVFNALRLKRSLAAGRGATPGTLIHSGAVTS</sequence>
<gene>
    <name type="primary">fixI</name>
    <name type="ordered locus">RA0659</name>
    <name type="ORF">SMa1209</name>
</gene>
<name>FIXI_RHIME</name>
<dbReference type="EC" id="7.2.2.-"/>
<dbReference type="EMBL" id="Z21854">
    <property type="protein sequence ID" value="CAA79907.1"/>
    <property type="molecule type" value="Genomic_DNA"/>
</dbReference>
<dbReference type="EMBL" id="AE006469">
    <property type="protein sequence ID" value="AAK65317.1"/>
    <property type="molecule type" value="Genomic_DNA"/>
</dbReference>
<dbReference type="PIR" id="C32052">
    <property type="entry name" value="C32052"/>
</dbReference>
<dbReference type="PIR" id="C95344">
    <property type="entry name" value="C95344"/>
</dbReference>
<dbReference type="RefSeq" id="NP_435905.1">
    <property type="nucleotide sequence ID" value="NC_003037.1"/>
</dbReference>
<dbReference type="RefSeq" id="WP_010967638.1">
    <property type="nucleotide sequence ID" value="NC_003037.1"/>
</dbReference>
<dbReference type="SMR" id="P18398"/>
<dbReference type="EnsemblBacteria" id="AAK65317">
    <property type="protein sequence ID" value="AAK65317"/>
    <property type="gene ID" value="SMa1209"/>
</dbReference>
<dbReference type="KEGG" id="sme:SMa1209"/>
<dbReference type="PATRIC" id="fig|266834.11.peg.679"/>
<dbReference type="HOGENOM" id="CLU_001771_0_3_5"/>
<dbReference type="OrthoDB" id="391538at2"/>
<dbReference type="Proteomes" id="UP000001976">
    <property type="component" value="Plasmid pSymA"/>
</dbReference>
<dbReference type="GO" id="GO:0005886">
    <property type="term" value="C:plasma membrane"/>
    <property type="evidence" value="ECO:0007669"/>
    <property type="project" value="UniProtKB-SubCell"/>
</dbReference>
<dbReference type="GO" id="GO:0005524">
    <property type="term" value="F:ATP binding"/>
    <property type="evidence" value="ECO:0007669"/>
    <property type="project" value="UniProtKB-KW"/>
</dbReference>
<dbReference type="GO" id="GO:0016887">
    <property type="term" value="F:ATP hydrolysis activity"/>
    <property type="evidence" value="ECO:0007669"/>
    <property type="project" value="InterPro"/>
</dbReference>
<dbReference type="GO" id="GO:0019829">
    <property type="term" value="F:ATPase-coupled monoatomic cation transmembrane transporter activity"/>
    <property type="evidence" value="ECO:0007669"/>
    <property type="project" value="InterPro"/>
</dbReference>
<dbReference type="GO" id="GO:0046872">
    <property type="term" value="F:metal ion binding"/>
    <property type="evidence" value="ECO:0007669"/>
    <property type="project" value="UniProtKB-KW"/>
</dbReference>
<dbReference type="GO" id="GO:0015662">
    <property type="term" value="F:P-type ion transporter activity"/>
    <property type="evidence" value="ECO:0007669"/>
    <property type="project" value="UniProtKB-ARBA"/>
</dbReference>
<dbReference type="GO" id="GO:0009399">
    <property type="term" value="P:nitrogen fixation"/>
    <property type="evidence" value="ECO:0007669"/>
    <property type="project" value="UniProtKB-KW"/>
</dbReference>
<dbReference type="CDD" id="cd00371">
    <property type="entry name" value="HMA"/>
    <property type="match status" value="1"/>
</dbReference>
<dbReference type="CDD" id="cd02092">
    <property type="entry name" value="P-type_ATPase_FixI-like"/>
    <property type="match status" value="1"/>
</dbReference>
<dbReference type="Gene3D" id="3.30.70.100">
    <property type="match status" value="1"/>
</dbReference>
<dbReference type="Gene3D" id="3.40.1110.10">
    <property type="entry name" value="Calcium-transporting ATPase, cytoplasmic domain N"/>
    <property type="match status" value="1"/>
</dbReference>
<dbReference type="Gene3D" id="2.70.150.10">
    <property type="entry name" value="Calcium-transporting ATPase, cytoplasmic transduction domain A"/>
    <property type="match status" value="1"/>
</dbReference>
<dbReference type="Gene3D" id="3.40.50.1000">
    <property type="entry name" value="HAD superfamily/HAD-like"/>
    <property type="match status" value="1"/>
</dbReference>
<dbReference type="InterPro" id="IPR023299">
    <property type="entry name" value="ATPase_P-typ_cyto_dom_N"/>
</dbReference>
<dbReference type="InterPro" id="IPR018303">
    <property type="entry name" value="ATPase_P-typ_P_site"/>
</dbReference>
<dbReference type="InterPro" id="IPR023298">
    <property type="entry name" value="ATPase_P-typ_TM_dom_sf"/>
</dbReference>
<dbReference type="InterPro" id="IPR008250">
    <property type="entry name" value="ATPase_P-typ_transduc_dom_A_sf"/>
</dbReference>
<dbReference type="InterPro" id="IPR036412">
    <property type="entry name" value="HAD-like_sf"/>
</dbReference>
<dbReference type="InterPro" id="IPR023214">
    <property type="entry name" value="HAD_sf"/>
</dbReference>
<dbReference type="InterPro" id="IPR017969">
    <property type="entry name" value="Heavy-metal-associated_CS"/>
</dbReference>
<dbReference type="InterPro" id="IPR006121">
    <property type="entry name" value="HMA_dom"/>
</dbReference>
<dbReference type="InterPro" id="IPR036163">
    <property type="entry name" value="HMA_dom_sf"/>
</dbReference>
<dbReference type="InterPro" id="IPR027256">
    <property type="entry name" value="P-typ_ATPase_IB"/>
</dbReference>
<dbReference type="InterPro" id="IPR001757">
    <property type="entry name" value="P_typ_ATPase"/>
</dbReference>
<dbReference type="NCBIfam" id="TIGR01511">
    <property type="entry name" value="ATPase-IB1_Cu"/>
    <property type="match status" value="1"/>
</dbReference>
<dbReference type="NCBIfam" id="TIGR01512">
    <property type="entry name" value="ATPase-IB2_Cd"/>
    <property type="match status" value="1"/>
</dbReference>
<dbReference type="NCBIfam" id="TIGR01525">
    <property type="entry name" value="ATPase-IB_hvy"/>
    <property type="match status" value="1"/>
</dbReference>
<dbReference type="NCBIfam" id="TIGR01494">
    <property type="entry name" value="ATPase_P-type"/>
    <property type="match status" value="1"/>
</dbReference>
<dbReference type="PANTHER" id="PTHR46594">
    <property type="entry name" value="P-TYPE CATION-TRANSPORTING ATPASE"/>
    <property type="match status" value="1"/>
</dbReference>
<dbReference type="PANTHER" id="PTHR46594:SF4">
    <property type="entry name" value="P-TYPE CATION-TRANSPORTING ATPASE"/>
    <property type="match status" value="1"/>
</dbReference>
<dbReference type="Pfam" id="PF00122">
    <property type="entry name" value="E1-E2_ATPase"/>
    <property type="match status" value="1"/>
</dbReference>
<dbReference type="Pfam" id="PF00702">
    <property type="entry name" value="Hydrolase"/>
    <property type="match status" value="1"/>
</dbReference>
<dbReference type="PRINTS" id="PR00119">
    <property type="entry name" value="CATATPASE"/>
</dbReference>
<dbReference type="PRINTS" id="PR00120">
    <property type="entry name" value="HATPASE"/>
</dbReference>
<dbReference type="SUPFAM" id="SSF81653">
    <property type="entry name" value="Calcium ATPase, transduction domain A"/>
    <property type="match status" value="1"/>
</dbReference>
<dbReference type="SUPFAM" id="SSF81665">
    <property type="entry name" value="Calcium ATPase, transmembrane domain M"/>
    <property type="match status" value="1"/>
</dbReference>
<dbReference type="SUPFAM" id="SSF56784">
    <property type="entry name" value="HAD-like"/>
    <property type="match status" value="1"/>
</dbReference>
<dbReference type="SUPFAM" id="SSF55008">
    <property type="entry name" value="HMA, heavy metal-associated domain"/>
    <property type="match status" value="1"/>
</dbReference>
<dbReference type="PROSITE" id="PS00154">
    <property type="entry name" value="ATPASE_E1_E2"/>
    <property type="match status" value="1"/>
</dbReference>
<dbReference type="PROSITE" id="PS01047">
    <property type="entry name" value="HMA_1"/>
    <property type="match status" value="1"/>
</dbReference>
<dbReference type="PROSITE" id="PS50846">
    <property type="entry name" value="HMA_2"/>
    <property type="match status" value="1"/>
</dbReference>
<protein>
    <recommendedName>
        <fullName>Nitrogen fixation protein FixI</fullName>
    </recommendedName>
    <alternativeName>
        <fullName>E1-E2 type cation ATPase FixI</fullName>
        <ecNumber>7.2.2.-</ecNumber>
    </alternativeName>
</protein>
<keyword id="KW-0067">ATP-binding</keyword>
<keyword id="KW-1003">Cell membrane</keyword>
<keyword id="KW-0460">Magnesium</keyword>
<keyword id="KW-0472">Membrane</keyword>
<keyword id="KW-0479">Metal-binding</keyword>
<keyword id="KW-0535">Nitrogen fixation</keyword>
<keyword id="KW-0547">Nucleotide-binding</keyword>
<keyword id="KW-0597">Phosphoprotein</keyword>
<keyword id="KW-0614">Plasmid</keyword>
<keyword id="KW-1185">Reference proteome</keyword>
<keyword id="KW-1278">Translocase</keyword>
<keyword id="KW-0812">Transmembrane</keyword>
<keyword id="KW-1133">Transmembrane helix</keyword>
<feature type="chain" id="PRO_0000046156" description="Nitrogen fixation protein FixI">
    <location>
        <begin position="1"/>
        <end position="757"/>
    </location>
</feature>
<feature type="topological domain" description="Cytoplasmic" evidence="2">
    <location>
        <begin position="1"/>
        <end position="121"/>
    </location>
</feature>
<feature type="transmembrane region" description="Helical" evidence="2">
    <location>
        <begin position="122"/>
        <end position="143"/>
    </location>
</feature>
<feature type="topological domain" description="Extracellular" evidence="2">
    <location>
        <begin position="144"/>
        <end position="158"/>
    </location>
</feature>
<feature type="transmembrane region" description="Helical" evidence="2">
    <location>
        <begin position="159"/>
        <end position="178"/>
    </location>
</feature>
<feature type="topological domain" description="Cytoplasmic" evidence="2">
    <location>
        <begin position="179"/>
        <end position="185"/>
    </location>
</feature>
<feature type="transmembrane region" description="Helical" evidence="2">
    <location>
        <begin position="186"/>
        <end position="206"/>
    </location>
</feature>
<feature type="topological domain" description="Extracellular" evidence="2">
    <location>
        <begin position="207"/>
        <end position="218"/>
    </location>
</feature>
<feature type="transmembrane region" description="Helical" evidence="2">
    <location>
        <begin position="219"/>
        <end position="239"/>
    </location>
</feature>
<feature type="topological domain" description="Cytoplasmic" evidence="2">
    <location>
        <begin position="240"/>
        <end position="368"/>
    </location>
</feature>
<feature type="transmembrane region" description="Helical" evidence="2">
    <location>
        <begin position="369"/>
        <end position="391"/>
    </location>
</feature>
<feature type="topological domain" description="Extracellular" evidence="2">
    <location>
        <begin position="392"/>
        <end position="398"/>
    </location>
</feature>
<feature type="transmembrane region" description="Helical" evidence="2">
    <location>
        <begin position="399"/>
        <end position="416"/>
    </location>
</feature>
<feature type="topological domain" description="Cytoplasmic" evidence="2">
    <location>
        <begin position="417"/>
        <end position="688"/>
    </location>
</feature>
<feature type="transmembrane region" description="Helical" evidence="2">
    <location>
        <begin position="689"/>
        <end position="708"/>
    </location>
</feature>
<feature type="topological domain" description="Extracellular" evidence="2">
    <location>
        <begin position="709"/>
        <end position="713"/>
    </location>
</feature>
<feature type="transmembrane region" description="Helical" evidence="2">
    <location>
        <begin position="714"/>
        <end position="732"/>
    </location>
</feature>
<feature type="topological domain" description="Cytoplasmic" evidence="2">
    <location>
        <begin position="733"/>
        <end position="757"/>
    </location>
</feature>
<feature type="domain" description="HMA" evidence="3">
    <location>
        <begin position="37"/>
        <end position="107"/>
    </location>
</feature>
<feature type="active site" description="4-aspartylphosphate intermediate" evidence="1">
    <location>
        <position position="454"/>
    </location>
</feature>
<feature type="binding site" evidence="3">
    <location>
        <position position="48"/>
    </location>
    <ligand>
        <name>a metal cation</name>
        <dbReference type="ChEBI" id="CHEBI:25213"/>
    </ligand>
</feature>
<feature type="binding site" evidence="3">
    <location>
        <position position="51"/>
    </location>
    <ligand>
        <name>a metal cation</name>
        <dbReference type="ChEBI" id="CHEBI:25213"/>
    </ligand>
</feature>
<feature type="binding site">
    <location>
        <position position="634"/>
    </location>
    <ligand>
        <name>Mg(2+)</name>
        <dbReference type="ChEBI" id="CHEBI:18420"/>
    </ligand>
</feature>
<feature type="binding site">
    <location>
        <position position="638"/>
    </location>
    <ligand>
        <name>Mg(2+)</name>
        <dbReference type="ChEBI" id="CHEBI:18420"/>
    </ligand>
</feature>
<organism>
    <name type="scientific">Rhizobium meliloti (strain 1021)</name>
    <name type="common">Ensifer meliloti</name>
    <name type="synonym">Sinorhizobium meliloti</name>
    <dbReference type="NCBI Taxonomy" id="266834"/>
    <lineage>
        <taxon>Bacteria</taxon>
        <taxon>Pseudomonadati</taxon>
        <taxon>Pseudomonadota</taxon>
        <taxon>Alphaproteobacteria</taxon>
        <taxon>Hyphomicrobiales</taxon>
        <taxon>Rhizobiaceae</taxon>
        <taxon>Sinorhizobium/Ensifer group</taxon>
        <taxon>Sinorhizobium</taxon>
    </lineage>
</organism>
<comment type="function">
    <text>FixI is a pump of a specific cation involved in symbiotic nitrogen fixation. The four proteins FixG, FixH, FixI, and FixS may participate in a membrane-bound complex coupling the FixI cation pump with a redox process catalyzed by FixG.</text>
</comment>
<comment type="catalytic activity">
    <reaction>
        <text>ATP + H2O = ADP + phosphate + H(+)</text>
        <dbReference type="Rhea" id="RHEA:13065"/>
        <dbReference type="ChEBI" id="CHEBI:15377"/>
        <dbReference type="ChEBI" id="CHEBI:15378"/>
        <dbReference type="ChEBI" id="CHEBI:30616"/>
        <dbReference type="ChEBI" id="CHEBI:43474"/>
        <dbReference type="ChEBI" id="CHEBI:456216"/>
    </reaction>
</comment>
<comment type="subcellular location">
    <subcellularLocation>
        <location>Cell membrane</location>
        <topology>Multi-pass membrane protein</topology>
    </subcellularLocation>
</comment>
<comment type="similarity">
    <text evidence="4">Belongs to the cation transport ATPase (P-type) (TC 3.A.3) family. Type IB subfamily.</text>
</comment>
<geneLocation type="plasmid">
    <name>pSymA</name>
    <name>megaplasmid 1</name>
</geneLocation>
<accession>P18398</accession>